<proteinExistence type="inferred from homology"/>
<comment type="function">
    <text evidence="1">Catalyzes the decarboxylation of four acetate groups of uroporphyrinogen-III to yield coproporphyrinogen-III.</text>
</comment>
<comment type="catalytic activity">
    <reaction evidence="1">
        <text>uroporphyrinogen III + 4 H(+) = coproporphyrinogen III + 4 CO2</text>
        <dbReference type="Rhea" id="RHEA:19865"/>
        <dbReference type="ChEBI" id="CHEBI:15378"/>
        <dbReference type="ChEBI" id="CHEBI:16526"/>
        <dbReference type="ChEBI" id="CHEBI:57308"/>
        <dbReference type="ChEBI" id="CHEBI:57309"/>
        <dbReference type="EC" id="4.1.1.37"/>
    </reaction>
</comment>
<comment type="pathway">
    <text evidence="1">Porphyrin-containing compound metabolism; protoporphyrin-IX biosynthesis; coproporphyrinogen-III from 5-aminolevulinate: step 4/4.</text>
</comment>
<comment type="subunit">
    <text evidence="1">Homodimer.</text>
</comment>
<comment type="subcellular location">
    <subcellularLocation>
        <location evidence="1">Cytoplasm</location>
    </subcellularLocation>
</comment>
<comment type="similarity">
    <text evidence="1">Belongs to the uroporphyrinogen decarboxylase family.</text>
</comment>
<reference key="1">
    <citation type="journal article" date="2008" name="J. Bacteriol.">
        <title>Genome sequence of the streptomycin-producing microorganism Streptomyces griseus IFO 13350.</title>
        <authorList>
            <person name="Ohnishi Y."/>
            <person name="Ishikawa J."/>
            <person name="Hara H."/>
            <person name="Suzuki H."/>
            <person name="Ikenoya M."/>
            <person name="Ikeda H."/>
            <person name="Yamashita A."/>
            <person name="Hattori M."/>
            <person name="Horinouchi S."/>
        </authorList>
    </citation>
    <scope>NUCLEOTIDE SEQUENCE [LARGE SCALE GENOMIC DNA]</scope>
    <source>
        <strain>JCM 4626 / CBS 651.72 / NBRC 13350 / KCC S-0626 / ISP 5235</strain>
    </source>
</reference>
<organism>
    <name type="scientific">Streptomyces griseus subsp. griseus (strain JCM 4626 / CBS 651.72 / NBRC 13350 / KCC S-0626 / ISP 5235)</name>
    <dbReference type="NCBI Taxonomy" id="455632"/>
    <lineage>
        <taxon>Bacteria</taxon>
        <taxon>Bacillati</taxon>
        <taxon>Actinomycetota</taxon>
        <taxon>Actinomycetes</taxon>
        <taxon>Kitasatosporales</taxon>
        <taxon>Streptomycetaceae</taxon>
        <taxon>Streptomyces</taxon>
    </lineage>
</organism>
<dbReference type="EC" id="4.1.1.37" evidence="1"/>
<dbReference type="EMBL" id="AP009493">
    <property type="protein sequence ID" value="BAG18302.1"/>
    <property type="molecule type" value="Genomic_DNA"/>
</dbReference>
<dbReference type="RefSeq" id="WP_003965519.1">
    <property type="nucleotide sequence ID" value="NC_010572.1"/>
</dbReference>
<dbReference type="SMR" id="B1VWH6"/>
<dbReference type="KEGG" id="sgr:SGR_1473"/>
<dbReference type="eggNOG" id="COG0407">
    <property type="taxonomic scope" value="Bacteria"/>
</dbReference>
<dbReference type="HOGENOM" id="CLU_040933_0_1_11"/>
<dbReference type="UniPathway" id="UPA00251">
    <property type="reaction ID" value="UER00321"/>
</dbReference>
<dbReference type="Proteomes" id="UP000001685">
    <property type="component" value="Chromosome"/>
</dbReference>
<dbReference type="GO" id="GO:0005829">
    <property type="term" value="C:cytosol"/>
    <property type="evidence" value="ECO:0007669"/>
    <property type="project" value="TreeGrafter"/>
</dbReference>
<dbReference type="GO" id="GO:0004853">
    <property type="term" value="F:uroporphyrinogen decarboxylase activity"/>
    <property type="evidence" value="ECO:0007669"/>
    <property type="project" value="UniProtKB-UniRule"/>
</dbReference>
<dbReference type="GO" id="GO:0006782">
    <property type="term" value="P:protoporphyrinogen IX biosynthetic process"/>
    <property type="evidence" value="ECO:0007669"/>
    <property type="project" value="UniProtKB-UniRule"/>
</dbReference>
<dbReference type="CDD" id="cd00717">
    <property type="entry name" value="URO-D"/>
    <property type="match status" value="1"/>
</dbReference>
<dbReference type="FunFam" id="3.20.20.210:FF:000005">
    <property type="entry name" value="Uroporphyrinogen decarboxylase"/>
    <property type="match status" value="1"/>
</dbReference>
<dbReference type="Gene3D" id="3.20.20.210">
    <property type="match status" value="1"/>
</dbReference>
<dbReference type="HAMAP" id="MF_00218">
    <property type="entry name" value="URO_D"/>
    <property type="match status" value="1"/>
</dbReference>
<dbReference type="InterPro" id="IPR038071">
    <property type="entry name" value="UROD/MetE-like_sf"/>
</dbReference>
<dbReference type="InterPro" id="IPR006361">
    <property type="entry name" value="Uroporphyrinogen_deCO2ase_HemE"/>
</dbReference>
<dbReference type="InterPro" id="IPR000257">
    <property type="entry name" value="Uroporphyrinogen_deCOase"/>
</dbReference>
<dbReference type="NCBIfam" id="TIGR01464">
    <property type="entry name" value="hemE"/>
    <property type="match status" value="1"/>
</dbReference>
<dbReference type="PANTHER" id="PTHR21091">
    <property type="entry name" value="METHYLTETRAHYDROFOLATE:HOMOCYSTEINE METHYLTRANSFERASE RELATED"/>
    <property type="match status" value="1"/>
</dbReference>
<dbReference type="PANTHER" id="PTHR21091:SF169">
    <property type="entry name" value="UROPORPHYRINOGEN DECARBOXYLASE"/>
    <property type="match status" value="1"/>
</dbReference>
<dbReference type="Pfam" id="PF01208">
    <property type="entry name" value="URO-D"/>
    <property type="match status" value="1"/>
</dbReference>
<dbReference type="SUPFAM" id="SSF51726">
    <property type="entry name" value="UROD/MetE-like"/>
    <property type="match status" value="1"/>
</dbReference>
<dbReference type="PROSITE" id="PS00906">
    <property type="entry name" value="UROD_1"/>
    <property type="match status" value="1"/>
</dbReference>
<dbReference type="PROSITE" id="PS00907">
    <property type="entry name" value="UROD_2"/>
    <property type="match status" value="1"/>
</dbReference>
<accession>B1VWH6</accession>
<protein>
    <recommendedName>
        <fullName evidence="1">Uroporphyrinogen decarboxylase</fullName>
        <shortName evidence="1">UPD</shortName>
        <shortName evidence="1">URO-D</shortName>
        <ecNumber evidence="1">4.1.1.37</ecNumber>
    </recommendedName>
</protein>
<evidence type="ECO:0000255" key="1">
    <source>
        <dbReference type="HAMAP-Rule" id="MF_00218"/>
    </source>
</evidence>
<evidence type="ECO:0000256" key="2">
    <source>
        <dbReference type="SAM" id="MobiDB-lite"/>
    </source>
</evidence>
<gene>
    <name evidence="1" type="primary">hemE</name>
    <name type="ordered locus">SGR_1473</name>
</gene>
<name>DCUP_STRGG</name>
<feature type="chain" id="PRO_1000197541" description="Uroporphyrinogen decarboxylase">
    <location>
        <begin position="1"/>
        <end position="365"/>
    </location>
</feature>
<feature type="region of interest" description="Disordered" evidence="2">
    <location>
        <begin position="1"/>
        <end position="20"/>
    </location>
</feature>
<feature type="compositionally biased region" description="Polar residues" evidence="2">
    <location>
        <begin position="1"/>
        <end position="17"/>
    </location>
</feature>
<feature type="binding site" evidence="1">
    <location>
        <begin position="48"/>
        <end position="52"/>
    </location>
    <ligand>
        <name>substrate</name>
    </ligand>
</feature>
<feature type="binding site" evidence="1">
    <location>
        <position position="97"/>
    </location>
    <ligand>
        <name>substrate</name>
    </ligand>
</feature>
<feature type="binding site" evidence="1">
    <location>
        <position position="172"/>
    </location>
    <ligand>
        <name>substrate</name>
    </ligand>
</feature>
<feature type="binding site" evidence="1">
    <location>
        <position position="227"/>
    </location>
    <ligand>
        <name>substrate</name>
    </ligand>
</feature>
<feature type="binding site" evidence="1">
    <location>
        <position position="341"/>
    </location>
    <ligand>
        <name>substrate</name>
    </ligand>
</feature>
<feature type="site" description="Transition state stabilizer" evidence="1">
    <location>
        <position position="97"/>
    </location>
</feature>
<keyword id="KW-0963">Cytoplasm</keyword>
<keyword id="KW-0210">Decarboxylase</keyword>
<keyword id="KW-0456">Lyase</keyword>
<keyword id="KW-0627">Porphyrin biosynthesis</keyword>
<sequence length="365" mass="39135">MSANDSPSGQQTTTSASLDAVRHATHDSAFLRACRREPVPHTPVWFMRQAGRSLPEYLKVREGIAMLDSCMMPELVAEITLQPVRRHKVDAAIYFSDIVVPLKAIGIDLDIKPGVGPVIAEPIRTRADLARLRDLTPEDVPYVTEAIGMLTAELGATPLIGFAGAPFTLASYLVEGGPSRNHERTKAMMYGDPQLWADLVDRLAEITGAFLKVQIEAGASAVQLFDSWVGALAPADYRRAVLPASAKVFDAVAPYGVPRIHFGVGTGELLGLMGEAGADVVGVDWRVPLNEAARRVGPGKALQGNLDPAVLFAPTPAVEEKTREVLDAAAGLEGHIFNLGHGVMPNMDPDALTRLVGYVHEQTAR</sequence>